<dbReference type="EMBL" id="AB092813">
    <property type="protein sequence ID" value="BAC20361.1"/>
    <property type="molecule type" value="mRNA"/>
</dbReference>
<dbReference type="EMBL" id="AK312002">
    <property type="protein sequence ID" value="BAG34940.1"/>
    <property type="molecule type" value="mRNA"/>
</dbReference>
<dbReference type="EMBL" id="AK125559">
    <property type="protein sequence ID" value="BAG54214.1"/>
    <property type="molecule type" value="mRNA"/>
</dbReference>
<dbReference type="EMBL" id="AC009133">
    <property type="status" value="NOT_ANNOTATED_CDS"/>
    <property type="molecule type" value="Genomic_DNA"/>
</dbReference>
<dbReference type="EMBL" id="AC002301">
    <property type="protein sequence ID" value="AAC08708.1"/>
    <property type="molecule type" value="Genomic_DNA"/>
</dbReference>
<dbReference type="EMBL" id="CH471238">
    <property type="protein sequence ID" value="EAW80011.1"/>
    <property type="molecule type" value="Genomic_DNA"/>
</dbReference>
<dbReference type="EMBL" id="BC029149">
    <property type="protein sequence ID" value="AAH29149.1"/>
    <property type="molecule type" value="mRNA"/>
</dbReference>
<dbReference type="EMBL" id="BC150656">
    <property type="protein sequence ID" value="AAI50657.1"/>
    <property type="molecule type" value="mRNA"/>
</dbReference>
<dbReference type="CCDS" id="CCDS54000.1"/>
<dbReference type="RefSeq" id="NP_689551.3">
    <property type="nucleotide sequence ID" value="NM_152338.4"/>
</dbReference>
<dbReference type="RefSeq" id="XP_011544223.1">
    <property type="nucleotide sequence ID" value="XM_011545921.2"/>
</dbReference>
<dbReference type="PDB" id="3APA">
    <property type="method" value="X-ray"/>
    <property type="resolution" value="1.65 A"/>
    <property type="chains" value="A=21-159"/>
</dbReference>
<dbReference type="PDB" id="3VY6">
    <property type="method" value="X-ray"/>
    <property type="resolution" value="2.00 A"/>
    <property type="chains" value="A=21-159"/>
</dbReference>
<dbReference type="PDB" id="3VY7">
    <property type="method" value="X-ray"/>
    <property type="resolution" value="2.14 A"/>
    <property type="chains" value="A=21-159"/>
</dbReference>
<dbReference type="PDB" id="3VZE">
    <property type="method" value="X-ray"/>
    <property type="resolution" value="1.90 A"/>
    <property type="chains" value="A=21-159"/>
</dbReference>
<dbReference type="PDB" id="3VZF">
    <property type="method" value="X-ray"/>
    <property type="resolution" value="2.80 A"/>
    <property type="chains" value="A=21-159"/>
</dbReference>
<dbReference type="PDB" id="3VZG">
    <property type="method" value="X-ray"/>
    <property type="resolution" value="2.70 A"/>
    <property type="chains" value="A=21-159"/>
</dbReference>
<dbReference type="PDB" id="7O3I">
    <property type="method" value="X-ray"/>
    <property type="resolution" value="1.50 A"/>
    <property type="chains" value="A=21-167"/>
</dbReference>
<dbReference type="PDB" id="7O4P">
    <property type="method" value="X-ray"/>
    <property type="resolution" value="1.08 A"/>
    <property type="chains" value="A=21-167"/>
</dbReference>
<dbReference type="PDB" id="7O88">
    <property type="method" value="X-ray"/>
    <property type="resolution" value="1.20 A"/>
    <property type="chains" value="A/B=21-167"/>
</dbReference>
<dbReference type="PDBsum" id="3APA"/>
<dbReference type="PDBsum" id="3VY6"/>
<dbReference type="PDBsum" id="3VY7"/>
<dbReference type="PDBsum" id="3VZE"/>
<dbReference type="PDBsum" id="3VZF"/>
<dbReference type="PDBsum" id="3VZG"/>
<dbReference type="PDBsum" id="7O3I"/>
<dbReference type="PDBsum" id="7O4P"/>
<dbReference type="PDBsum" id="7O88"/>
<dbReference type="SMR" id="O60844"/>
<dbReference type="BioGRID" id="576089">
    <property type="interactions" value="11"/>
</dbReference>
<dbReference type="FunCoup" id="O60844">
    <property type="interactions" value="5"/>
</dbReference>
<dbReference type="IntAct" id="O60844">
    <property type="interactions" value="12"/>
</dbReference>
<dbReference type="STRING" id="9606.ENSP00000383563"/>
<dbReference type="UniLectin" id="O60844"/>
<dbReference type="iPTMnet" id="O60844"/>
<dbReference type="PhosphoSitePlus" id="O60844"/>
<dbReference type="BioMuta" id="ZG16"/>
<dbReference type="MassIVE" id="O60844"/>
<dbReference type="PaxDb" id="9606-ENSP00000383563"/>
<dbReference type="PeptideAtlas" id="O60844"/>
<dbReference type="ProteomicsDB" id="49629"/>
<dbReference type="Antibodypedia" id="43439">
    <property type="antibodies" value="87 antibodies from 17 providers"/>
</dbReference>
<dbReference type="DNASU" id="653808"/>
<dbReference type="Ensembl" id="ENST00000400752.6">
    <property type="protein sequence ID" value="ENSP00000383563.4"/>
    <property type="gene ID" value="ENSG00000174992.8"/>
</dbReference>
<dbReference type="GeneID" id="653808"/>
<dbReference type="KEGG" id="hsa:653808"/>
<dbReference type="MANE-Select" id="ENST00000400752.6">
    <property type="protein sequence ID" value="ENSP00000383563.4"/>
    <property type="RefSeq nucleotide sequence ID" value="NM_152338.4"/>
    <property type="RefSeq protein sequence ID" value="NP_689551.3"/>
</dbReference>
<dbReference type="UCSC" id="uc002dtr.5">
    <property type="organism name" value="human"/>
</dbReference>
<dbReference type="AGR" id="HGNC:30961"/>
<dbReference type="CTD" id="653808"/>
<dbReference type="DisGeNET" id="653808"/>
<dbReference type="GeneCards" id="ZG16"/>
<dbReference type="HGNC" id="HGNC:30961">
    <property type="gene designation" value="ZG16"/>
</dbReference>
<dbReference type="HPA" id="ENSG00000174992">
    <property type="expression patterns" value="Tissue enriched (intestine)"/>
</dbReference>
<dbReference type="neXtProt" id="NX_O60844"/>
<dbReference type="OpenTargets" id="ENSG00000174992"/>
<dbReference type="PharmGKB" id="PA164727719"/>
<dbReference type="VEuPathDB" id="HostDB:ENSG00000174992"/>
<dbReference type="eggNOG" id="ENOG502S4MA">
    <property type="taxonomic scope" value="Eukaryota"/>
</dbReference>
<dbReference type="GeneTree" id="ENSGT00940000159195"/>
<dbReference type="HOGENOM" id="CLU_104246_0_0_1"/>
<dbReference type="InParanoid" id="O60844"/>
<dbReference type="OMA" id="YPSDCGS"/>
<dbReference type="OrthoDB" id="2415936at2759"/>
<dbReference type="PAN-GO" id="O60844">
    <property type="GO annotations" value="1 GO annotation based on evolutionary models"/>
</dbReference>
<dbReference type="PhylomeDB" id="O60844"/>
<dbReference type="TreeFam" id="TF333440"/>
<dbReference type="PathwayCommons" id="O60844"/>
<dbReference type="SignaLink" id="O60844"/>
<dbReference type="BioGRID-ORCS" id="653808">
    <property type="hits" value="13 hits in 1138 CRISPR screens"/>
</dbReference>
<dbReference type="ChiTaRS" id="ZG16">
    <property type="organism name" value="human"/>
</dbReference>
<dbReference type="EvolutionaryTrace" id="O60844"/>
<dbReference type="GeneWiki" id="ZG16"/>
<dbReference type="GenomeRNAi" id="653808"/>
<dbReference type="Pharos" id="O60844">
    <property type="development level" value="Tbio"/>
</dbReference>
<dbReference type="PRO" id="PR:O60844"/>
<dbReference type="Proteomes" id="UP000005640">
    <property type="component" value="Chromosome 16"/>
</dbReference>
<dbReference type="RNAct" id="O60844">
    <property type="molecule type" value="protein"/>
</dbReference>
<dbReference type="Bgee" id="ENSG00000174992">
    <property type="expression patterns" value="Expressed in mucosa of sigmoid colon and 71 other cell types or tissues"/>
</dbReference>
<dbReference type="GO" id="GO:0062023">
    <property type="term" value="C:collagen-containing extracellular matrix"/>
    <property type="evidence" value="ECO:0000314"/>
    <property type="project" value="UniProtKB"/>
</dbReference>
<dbReference type="GO" id="GO:0005796">
    <property type="term" value="C:Golgi lumen"/>
    <property type="evidence" value="ECO:0000314"/>
    <property type="project" value="UniProtKB"/>
</dbReference>
<dbReference type="GO" id="GO:0070701">
    <property type="term" value="C:mucus layer"/>
    <property type="evidence" value="ECO:0007669"/>
    <property type="project" value="Ensembl"/>
</dbReference>
<dbReference type="GO" id="GO:0042589">
    <property type="term" value="C:zymogen granule membrane"/>
    <property type="evidence" value="ECO:0007669"/>
    <property type="project" value="Ensembl"/>
</dbReference>
<dbReference type="GO" id="GO:0030246">
    <property type="term" value="F:carbohydrate binding"/>
    <property type="evidence" value="ECO:0007669"/>
    <property type="project" value="UniProtKB-KW"/>
</dbReference>
<dbReference type="GO" id="GO:0042834">
    <property type="term" value="F:peptidoglycan binding"/>
    <property type="evidence" value="ECO:0007669"/>
    <property type="project" value="Ensembl"/>
</dbReference>
<dbReference type="GO" id="GO:0050830">
    <property type="term" value="P:defense response to Gram-positive bacterium"/>
    <property type="evidence" value="ECO:0007669"/>
    <property type="project" value="Ensembl"/>
</dbReference>
<dbReference type="GO" id="GO:0015031">
    <property type="term" value="P:protein transport"/>
    <property type="evidence" value="ECO:0000304"/>
    <property type="project" value="UniProtKB"/>
</dbReference>
<dbReference type="GO" id="GO:0052373">
    <property type="term" value="P:suppression of symbiont entry into host"/>
    <property type="evidence" value="ECO:0007669"/>
    <property type="project" value="Ensembl"/>
</dbReference>
<dbReference type="CDD" id="cd09611">
    <property type="entry name" value="Jacalin_ZG16_like"/>
    <property type="match status" value="1"/>
</dbReference>
<dbReference type="FunFam" id="2.100.10.30:FF:000002">
    <property type="entry name" value="Zymogen granule membrane protein 16"/>
    <property type="match status" value="1"/>
</dbReference>
<dbReference type="Gene3D" id="2.100.10.30">
    <property type="entry name" value="Jacalin-like lectin domain"/>
    <property type="match status" value="1"/>
</dbReference>
<dbReference type="InterPro" id="IPR001229">
    <property type="entry name" value="Jacalin-like_lectin_dom"/>
</dbReference>
<dbReference type="InterPro" id="IPR036404">
    <property type="entry name" value="Jacalin-like_lectin_dom_sf"/>
</dbReference>
<dbReference type="InterPro" id="IPR052321">
    <property type="entry name" value="PolyBind_ProtTraffic"/>
</dbReference>
<dbReference type="PANTHER" id="PTHR33589">
    <property type="entry name" value="OS11G0524900 PROTEIN"/>
    <property type="match status" value="1"/>
</dbReference>
<dbReference type="PANTHER" id="PTHR33589:SF4">
    <property type="entry name" value="ZYMOGEN GRANULE MEMBRANE PROTEIN 16"/>
    <property type="match status" value="1"/>
</dbReference>
<dbReference type="Pfam" id="PF01419">
    <property type="entry name" value="Jacalin"/>
    <property type="match status" value="1"/>
</dbReference>
<dbReference type="SMART" id="SM00915">
    <property type="entry name" value="Jacalin"/>
    <property type="match status" value="1"/>
</dbReference>
<dbReference type="SUPFAM" id="SSF51101">
    <property type="entry name" value="Mannose-binding lectins"/>
    <property type="match status" value="1"/>
</dbReference>
<dbReference type="PROSITE" id="PS51752">
    <property type="entry name" value="JACALIN_LECTIN"/>
    <property type="match status" value="1"/>
</dbReference>
<name>ZG16_HUMAN</name>
<protein>
    <recommendedName>
        <fullName>Zymogen granule membrane protein 16</fullName>
        <shortName>Zymogen granule protein 16</shortName>
        <shortName>hZG16</shortName>
    </recommendedName>
    <alternativeName>
        <fullName>Secretory lectin ZG16</fullName>
    </alternativeName>
</protein>
<reference key="1">
    <citation type="submission" date="2002-10" db="EMBL/GenBank/DDBJ databases">
        <title>Carbohydrate-binding activity of ZG16p.</title>
        <authorList>
            <person name="Hosokawa S."/>
            <person name="Kojima-Aikawa K."/>
        </authorList>
    </citation>
    <scope>NUCLEOTIDE SEQUENCE [MRNA]</scope>
    <scope>VARIANTS SER-32 AND THR-162</scope>
    <source>
        <tissue>Colon adenocarcinoma</tissue>
    </source>
</reference>
<reference key="2">
    <citation type="journal article" date="2004" name="Nat. Genet.">
        <title>Complete sequencing and characterization of 21,243 full-length human cDNAs.</title>
        <authorList>
            <person name="Ota T."/>
            <person name="Suzuki Y."/>
            <person name="Nishikawa T."/>
            <person name="Otsuki T."/>
            <person name="Sugiyama T."/>
            <person name="Irie R."/>
            <person name="Wakamatsu A."/>
            <person name="Hayashi K."/>
            <person name="Sato H."/>
            <person name="Nagai K."/>
            <person name="Kimura K."/>
            <person name="Makita H."/>
            <person name="Sekine M."/>
            <person name="Obayashi M."/>
            <person name="Nishi T."/>
            <person name="Shibahara T."/>
            <person name="Tanaka T."/>
            <person name="Ishii S."/>
            <person name="Yamamoto J."/>
            <person name="Saito K."/>
            <person name="Kawai Y."/>
            <person name="Isono Y."/>
            <person name="Nakamura Y."/>
            <person name="Nagahari K."/>
            <person name="Murakami K."/>
            <person name="Yasuda T."/>
            <person name="Iwayanagi T."/>
            <person name="Wagatsuma M."/>
            <person name="Shiratori A."/>
            <person name="Sudo H."/>
            <person name="Hosoiri T."/>
            <person name="Kaku Y."/>
            <person name="Kodaira H."/>
            <person name="Kondo H."/>
            <person name="Sugawara M."/>
            <person name="Takahashi M."/>
            <person name="Kanda K."/>
            <person name="Yokoi T."/>
            <person name="Furuya T."/>
            <person name="Kikkawa E."/>
            <person name="Omura Y."/>
            <person name="Abe K."/>
            <person name="Kamihara K."/>
            <person name="Katsuta N."/>
            <person name="Sato K."/>
            <person name="Tanikawa M."/>
            <person name="Yamazaki M."/>
            <person name="Ninomiya K."/>
            <person name="Ishibashi T."/>
            <person name="Yamashita H."/>
            <person name="Murakawa K."/>
            <person name="Fujimori K."/>
            <person name="Tanai H."/>
            <person name="Kimata M."/>
            <person name="Watanabe M."/>
            <person name="Hiraoka S."/>
            <person name="Chiba Y."/>
            <person name="Ishida S."/>
            <person name="Ono Y."/>
            <person name="Takiguchi S."/>
            <person name="Watanabe S."/>
            <person name="Yosida M."/>
            <person name="Hotuta T."/>
            <person name="Kusano J."/>
            <person name="Kanehori K."/>
            <person name="Takahashi-Fujii A."/>
            <person name="Hara H."/>
            <person name="Tanase T.-O."/>
            <person name="Nomura Y."/>
            <person name="Togiya S."/>
            <person name="Komai F."/>
            <person name="Hara R."/>
            <person name="Takeuchi K."/>
            <person name="Arita M."/>
            <person name="Imose N."/>
            <person name="Musashino K."/>
            <person name="Yuuki H."/>
            <person name="Oshima A."/>
            <person name="Sasaki N."/>
            <person name="Aotsuka S."/>
            <person name="Yoshikawa Y."/>
            <person name="Matsunawa H."/>
            <person name="Ichihara T."/>
            <person name="Shiohata N."/>
            <person name="Sano S."/>
            <person name="Moriya S."/>
            <person name="Momiyama H."/>
            <person name="Satoh N."/>
            <person name="Takami S."/>
            <person name="Terashima Y."/>
            <person name="Suzuki O."/>
            <person name="Nakagawa S."/>
            <person name="Senoh A."/>
            <person name="Mizoguchi H."/>
            <person name="Goto Y."/>
            <person name="Shimizu F."/>
            <person name="Wakebe H."/>
            <person name="Hishigaki H."/>
            <person name="Watanabe T."/>
            <person name="Sugiyama A."/>
            <person name="Takemoto M."/>
            <person name="Kawakami B."/>
            <person name="Yamazaki M."/>
            <person name="Watanabe K."/>
            <person name="Kumagai A."/>
            <person name="Itakura S."/>
            <person name="Fukuzumi Y."/>
            <person name="Fujimori Y."/>
            <person name="Komiyama M."/>
            <person name="Tashiro H."/>
            <person name="Tanigami A."/>
            <person name="Fujiwara T."/>
            <person name="Ono T."/>
            <person name="Yamada K."/>
            <person name="Fujii Y."/>
            <person name="Ozaki K."/>
            <person name="Hirao M."/>
            <person name="Ohmori Y."/>
            <person name="Kawabata A."/>
            <person name="Hikiji T."/>
            <person name="Kobatake N."/>
            <person name="Inagaki H."/>
            <person name="Ikema Y."/>
            <person name="Okamoto S."/>
            <person name="Okitani R."/>
            <person name="Kawakami T."/>
            <person name="Noguchi S."/>
            <person name="Itoh T."/>
            <person name="Shigeta K."/>
            <person name="Senba T."/>
            <person name="Matsumura K."/>
            <person name="Nakajima Y."/>
            <person name="Mizuno T."/>
            <person name="Morinaga M."/>
            <person name="Sasaki M."/>
            <person name="Togashi T."/>
            <person name="Oyama M."/>
            <person name="Hata H."/>
            <person name="Watanabe M."/>
            <person name="Komatsu T."/>
            <person name="Mizushima-Sugano J."/>
            <person name="Satoh T."/>
            <person name="Shirai Y."/>
            <person name="Takahashi Y."/>
            <person name="Nakagawa K."/>
            <person name="Okumura K."/>
            <person name="Nagase T."/>
            <person name="Nomura N."/>
            <person name="Kikuchi H."/>
            <person name="Masuho Y."/>
            <person name="Yamashita R."/>
            <person name="Nakai K."/>
            <person name="Yada T."/>
            <person name="Nakamura Y."/>
            <person name="Ohara O."/>
            <person name="Isogai T."/>
            <person name="Sugano S."/>
        </authorList>
    </citation>
    <scope>NUCLEOTIDE SEQUENCE [LARGE SCALE MRNA]</scope>
    <scope>VARIANTS SER-32 AND THR-162</scope>
    <source>
        <tissue>Colon</tissue>
        <tissue>Rectum</tissue>
    </source>
</reference>
<reference key="3">
    <citation type="journal article" date="2004" name="Nature">
        <title>The sequence and analysis of duplication-rich human chromosome 16.</title>
        <authorList>
            <person name="Martin J."/>
            <person name="Han C."/>
            <person name="Gordon L.A."/>
            <person name="Terry A."/>
            <person name="Prabhakar S."/>
            <person name="She X."/>
            <person name="Xie G."/>
            <person name="Hellsten U."/>
            <person name="Chan Y.M."/>
            <person name="Altherr M."/>
            <person name="Couronne O."/>
            <person name="Aerts A."/>
            <person name="Bajorek E."/>
            <person name="Black S."/>
            <person name="Blumer H."/>
            <person name="Branscomb E."/>
            <person name="Brown N.C."/>
            <person name="Bruno W.J."/>
            <person name="Buckingham J.M."/>
            <person name="Callen D.F."/>
            <person name="Campbell C.S."/>
            <person name="Campbell M.L."/>
            <person name="Campbell E.W."/>
            <person name="Caoile C."/>
            <person name="Challacombe J.F."/>
            <person name="Chasteen L.A."/>
            <person name="Chertkov O."/>
            <person name="Chi H.C."/>
            <person name="Christensen M."/>
            <person name="Clark L.M."/>
            <person name="Cohn J.D."/>
            <person name="Denys M."/>
            <person name="Detter J.C."/>
            <person name="Dickson M."/>
            <person name="Dimitrijevic-Bussod M."/>
            <person name="Escobar J."/>
            <person name="Fawcett J.J."/>
            <person name="Flowers D."/>
            <person name="Fotopulos D."/>
            <person name="Glavina T."/>
            <person name="Gomez M."/>
            <person name="Gonzales E."/>
            <person name="Goodstein D."/>
            <person name="Goodwin L.A."/>
            <person name="Grady D.L."/>
            <person name="Grigoriev I."/>
            <person name="Groza M."/>
            <person name="Hammon N."/>
            <person name="Hawkins T."/>
            <person name="Haydu L."/>
            <person name="Hildebrand C.E."/>
            <person name="Huang W."/>
            <person name="Israni S."/>
            <person name="Jett J."/>
            <person name="Jewett P.B."/>
            <person name="Kadner K."/>
            <person name="Kimball H."/>
            <person name="Kobayashi A."/>
            <person name="Krawczyk M.-C."/>
            <person name="Leyba T."/>
            <person name="Longmire J.L."/>
            <person name="Lopez F."/>
            <person name="Lou Y."/>
            <person name="Lowry S."/>
            <person name="Ludeman T."/>
            <person name="Manohar C.F."/>
            <person name="Mark G.A."/>
            <person name="McMurray K.L."/>
            <person name="Meincke L.J."/>
            <person name="Morgan J."/>
            <person name="Moyzis R.K."/>
            <person name="Mundt M.O."/>
            <person name="Munk A.C."/>
            <person name="Nandkeshwar R.D."/>
            <person name="Pitluck S."/>
            <person name="Pollard M."/>
            <person name="Predki P."/>
            <person name="Parson-Quintana B."/>
            <person name="Ramirez L."/>
            <person name="Rash S."/>
            <person name="Retterer J."/>
            <person name="Ricke D.O."/>
            <person name="Robinson D.L."/>
            <person name="Rodriguez A."/>
            <person name="Salamov A."/>
            <person name="Saunders E.H."/>
            <person name="Scott D."/>
            <person name="Shough T."/>
            <person name="Stallings R.L."/>
            <person name="Stalvey M."/>
            <person name="Sutherland R.D."/>
            <person name="Tapia R."/>
            <person name="Tesmer J.G."/>
            <person name="Thayer N."/>
            <person name="Thompson L.S."/>
            <person name="Tice H."/>
            <person name="Torney D.C."/>
            <person name="Tran-Gyamfi M."/>
            <person name="Tsai M."/>
            <person name="Ulanovsky L.E."/>
            <person name="Ustaszewska A."/>
            <person name="Vo N."/>
            <person name="White P.S."/>
            <person name="Williams A.L."/>
            <person name="Wills P.L."/>
            <person name="Wu J.-R."/>
            <person name="Wu K."/>
            <person name="Yang J."/>
            <person name="DeJong P."/>
            <person name="Bruce D."/>
            <person name="Doggett N.A."/>
            <person name="Deaven L."/>
            <person name="Schmutz J."/>
            <person name="Grimwood J."/>
            <person name="Richardson P."/>
            <person name="Rokhsar D.S."/>
            <person name="Eichler E.E."/>
            <person name="Gilna P."/>
            <person name="Lucas S.M."/>
            <person name="Myers R.M."/>
            <person name="Rubin E.M."/>
            <person name="Pennacchio L.A."/>
        </authorList>
    </citation>
    <scope>NUCLEOTIDE SEQUENCE [LARGE SCALE GENOMIC DNA]</scope>
</reference>
<reference key="4">
    <citation type="journal article" date="1999" name="Genomics">
        <title>Genome duplications and other features in 12 Mb of DNA sequence from human chromosome 16p and 16q.</title>
        <authorList>
            <person name="Loftus B.J."/>
            <person name="Kim U.-J."/>
            <person name="Sneddon V.P."/>
            <person name="Kalush F."/>
            <person name="Brandon R."/>
            <person name="Fuhrmann J."/>
            <person name="Mason T."/>
            <person name="Crosby M.L."/>
            <person name="Barnstead M."/>
            <person name="Cronin L."/>
            <person name="Mays A.D."/>
            <person name="Cao Y."/>
            <person name="Xu R.X."/>
            <person name="Kang H.-L."/>
            <person name="Mitchell S."/>
            <person name="Eichler E.E."/>
            <person name="Harris P.C."/>
            <person name="Venter J.C."/>
            <person name="Adams M.D."/>
        </authorList>
    </citation>
    <scope>NUCLEOTIDE SEQUENCE [LARGE SCALE GENOMIC DNA]</scope>
</reference>
<reference key="5">
    <citation type="submission" date="2005-07" db="EMBL/GenBank/DDBJ databases">
        <authorList>
            <person name="Mural R.J."/>
            <person name="Istrail S."/>
            <person name="Sutton G.G."/>
            <person name="Florea L."/>
            <person name="Halpern A.L."/>
            <person name="Mobarry C.M."/>
            <person name="Lippert R."/>
            <person name="Walenz B."/>
            <person name="Shatkay H."/>
            <person name="Dew I."/>
            <person name="Miller J.R."/>
            <person name="Flanigan M.J."/>
            <person name="Edwards N.J."/>
            <person name="Bolanos R."/>
            <person name="Fasulo D."/>
            <person name="Halldorsson B.V."/>
            <person name="Hannenhalli S."/>
            <person name="Turner R."/>
            <person name="Yooseph S."/>
            <person name="Lu F."/>
            <person name="Nusskern D.R."/>
            <person name="Shue B.C."/>
            <person name="Zheng X.H."/>
            <person name="Zhong F."/>
            <person name="Delcher A.L."/>
            <person name="Huson D.H."/>
            <person name="Kravitz S.A."/>
            <person name="Mouchard L."/>
            <person name="Reinert K."/>
            <person name="Remington K.A."/>
            <person name="Clark A.G."/>
            <person name="Waterman M.S."/>
            <person name="Eichler E.E."/>
            <person name="Adams M.D."/>
            <person name="Hunkapiller M.W."/>
            <person name="Myers E.W."/>
            <person name="Venter J.C."/>
        </authorList>
    </citation>
    <scope>NUCLEOTIDE SEQUENCE [LARGE SCALE GENOMIC DNA]</scope>
    <scope>VARIANTS SER-32 AND THR-162</scope>
</reference>
<reference key="6">
    <citation type="journal article" date="2004" name="Genome Res.">
        <title>The status, quality, and expansion of the NIH full-length cDNA project: the Mammalian Gene Collection (MGC).</title>
        <authorList>
            <consortium name="The MGC Project Team"/>
        </authorList>
    </citation>
    <scope>NUCLEOTIDE SEQUENCE [LARGE SCALE MRNA]</scope>
    <scope>VARIANTS SER-32 AND THR-162</scope>
    <source>
        <tissue>Colon</tissue>
    </source>
</reference>
<reference key="7">
    <citation type="journal article" date="2004" name="Protein Sci.">
        <title>Signal peptide prediction based on analysis of experimentally verified cleavage sites.</title>
        <authorList>
            <person name="Zhang Z."/>
            <person name="Henzel W.J."/>
        </authorList>
    </citation>
    <scope>PROTEIN SEQUENCE OF 17-31</scope>
</reference>
<reference key="8">
    <citation type="journal article" date="2007" name="Biochem. Biophys. Res. Commun.">
        <title>hZG16, a novel human secreted protein expressed in liver, was down-regulated in hepatocellular carcinoma.</title>
        <authorList>
            <person name="Zhou Y.B."/>
            <person name="Cao J.B."/>
            <person name="Yang H.M."/>
            <person name="Zhu H."/>
            <person name="Xu Z.G."/>
            <person name="Wang K.S."/>
            <person name="Zhang X."/>
            <person name="Wang Z.Q."/>
            <person name="Han Z.G."/>
        </authorList>
    </citation>
    <scope>FUNCTION</scope>
    <scope>SUBCELLULAR LOCATION</scope>
    <scope>TISSUE SPECIFICITY</scope>
</reference>
<reference key="9">
    <citation type="journal article" date="2011" name="Biochem. Biophys. Res. Commun.">
        <title>Crystal structures of human secretory proteins ZG16p and ZG16b reveal a Jacalin-related beta-prism fold.</title>
        <authorList>
            <person name="Kanagawa M."/>
            <person name="Satoh T."/>
            <person name="Ikeda A."/>
            <person name="Nakano Y."/>
            <person name="Yagi H."/>
            <person name="Kato K."/>
            <person name="Kojima-Aikawa K."/>
            <person name="Yamaguchi Y."/>
        </authorList>
    </citation>
    <scope>X-RAY CRYSTALLOGRAPHY (1.65 ANGSTROMS) OF 21-159</scope>
</reference>
<organism>
    <name type="scientific">Homo sapiens</name>
    <name type="common">Human</name>
    <dbReference type="NCBI Taxonomy" id="9606"/>
    <lineage>
        <taxon>Eukaryota</taxon>
        <taxon>Metazoa</taxon>
        <taxon>Chordata</taxon>
        <taxon>Craniata</taxon>
        <taxon>Vertebrata</taxon>
        <taxon>Euteleostomi</taxon>
        <taxon>Mammalia</taxon>
        <taxon>Eutheria</taxon>
        <taxon>Euarchontoglires</taxon>
        <taxon>Primates</taxon>
        <taxon>Haplorrhini</taxon>
        <taxon>Catarrhini</taxon>
        <taxon>Hominidae</taxon>
        <taxon>Homo</taxon>
    </lineage>
</organism>
<sequence length="167" mass="18133">MLTVALLALLCASASGNAIQARSSSYSGEYGGGGGKRFSHSGNQLDGPITALRVRVNTYYIVGLQVRYGKVWSDYVGGRNGDLEEIFLHPGESVIQVSGKYKWYLKKLVFVTDKGRYLSFGKDSGTSFNAVPLHPNTVLRFISGRSGSLIDAIGLHWDVYPSSCSRC</sequence>
<comment type="function">
    <text evidence="6">May play a role in protein trafficking. May act as a linker molecule between the submembranous matrix on the luminal side of zymogen granule membrane (ZGM) and aggregated secretory proteins during granule formation in the TGN.</text>
</comment>
<comment type="interaction">
    <interactant intactId="EBI-746479">
        <id>O60844</id>
    </interactant>
    <interactant intactId="EBI-12092171">
        <id>Q12797-6</id>
        <label>ASPH</label>
    </interactant>
    <organismsDiffer>false</organismsDiffer>
    <experiments>3</experiments>
</comment>
<comment type="interaction">
    <interactant intactId="EBI-746479">
        <id>O60844</id>
    </interactant>
    <interactant intactId="EBI-11962928">
        <id>Q9UI47-2</id>
        <label>CTNNA3</label>
    </interactant>
    <organismsDiffer>false</organismsDiffer>
    <experiments>3</experiments>
</comment>
<comment type="interaction">
    <interactant intactId="EBI-746479">
        <id>O60844</id>
    </interactant>
    <interactant intactId="EBI-748515">
        <id>Q8IVS8</id>
        <label>GLYCTK</label>
    </interactant>
    <organismsDiffer>false</organismsDiffer>
    <experiments>3</experiments>
</comment>
<comment type="interaction">
    <interactant intactId="EBI-746479">
        <id>O60844</id>
    </interactant>
    <interactant intactId="EBI-751501">
        <id>Q9Y2W7</id>
        <label>KCNIP3</label>
    </interactant>
    <organismsDiffer>false</organismsDiffer>
    <experiments>3</experiments>
</comment>
<comment type="interaction">
    <interactant intactId="EBI-746479">
        <id>O60844</id>
    </interactant>
    <interactant intactId="EBI-1053259">
        <id>Q9UHX1</id>
        <label>PUF60</label>
    </interactant>
    <organismsDiffer>false</organismsDiffer>
    <experiments>3</experiments>
</comment>
<comment type="interaction">
    <interactant intactId="EBI-746479">
        <id>O60844</id>
    </interactant>
    <interactant intactId="EBI-11529177">
        <id>Q9UHX1-2</id>
        <label>PUF60</label>
    </interactant>
    <organismsDiffer>false</organismsDiffer>
    <experiments>3</experiments>
</comment>
<comment type="interaction">
    <interactant intactId="EBI-746479">
        <id>O60844</id>
    </interactant>
    <interactant intactId="EBI-347996">
        <id>O43765</id>
        <label>SGTA</label>
    </interactant>
    <organismsDiffer>false</organismsDiffer>
    <experiments>12</experiments>
</comment>
<comment type="interaction">
    <interactant intactId="EBI-746479">
        <id>O60844</id>
    </interactant>
    <interactant intactId="EBI-744081">
        <id>Q96EQ0</id>
        <label>SGTB</label>
    </interactant>
    <organismsDiffer>false</organismsDiffer>
    <experiments>5</experiments>
</comment>
<comment type="interaction">
    <interactant intactId="EBI-746479">
        <id>O60844</id>
    </interactant>
    <interactant intactId="EBI-10180829">
        <id>Q7KZS0</id>
        <label>UBE2I</label>
    </interactant>
    <organismsDiffer>false</organismsDiffer>
    <experiments>3</experiments>
</comment>
<comment type="interaction">
    <interactant intactId="EBI-746479">
        <id>O60844</id>
    </interactant>
    <interactant intactId="EBI-741480">
        <id>Q9UMX0</id>
        <label>UBQLN1</label>
    </interactant>
    <organismsDiffer>false</organismsDiffer>
    <experiments>10</experiments>
</comment>
<comment type="interaction">
    <interactant intactId="EBI-746479">
        <id>O60844</id>
    </interactant>
    <interactant intactId="EBI-10173939">
        <id>Q9UMX0-2</id>
        <label>UBQLN1</label>
    </interactant>
    <organismsDiffer>false</organismsDiffer>
    <experiments>3</experiments>
</comment>
<comment type="interaction">
    <interactant intactId="EBI-746479">
        <id>O60844</id>
    </interactant>
    <interactant intactId="EBI-947187">
        <id>Q9UHD9</id>
        <label>UBQLN2</label>
    </interactant>
    <organismsDiffer>false</organismsDiffer>
    <experiments>3</experiments>
</comment>
<comment type="subcellular location">
    <subcellularLocation>
        <location evidence="6">Secreted</location>
        <location evidence="6">Extracellular space</location>
        <location evidence="6">Extracellular matrix</location>
    </subcellularLocation>
    <subcellularLocation>
        <location evidence="1">Zymogen granule lumen</location>
    </subcellularLocation>
    <subcellularLocation>
        <location evidence="6">Golgi apparatus lumen</location>
    </subcellularLocation>
</comment>
<comment type="tissue specificity">
    <text evidence="6">Highly expressed in liver. Detected at lower levels in colon, ileum and jejunum.</text>
</comment>
<comment type="similarity">
    <text evidence="2 9">Belongs to the jacalin lectin family.</text>
</comment>
<gene>
    <name type="primary">ZG16</name>
</gene>
<proteinExistence type="evidence at protein level"/>
<evidence type="ECO:0000250" key="1">
    <source>
        <dbReference type="UniProtKB" id="Q8CJD3"/>
    </source>
</evidence>
<evidence type="ECO:0000255" key="2">
    <source>
        <dbReference type="PROSITE-ProRule" id="PRU01088"/>
    </source>
</evidence>
<evidence type="ECO:0000269" key="3">
    <source>
    </source>
</evidence>
<evidence type="ECO:0000269" key="4">
    <source>
    </source>
</evidence>
<evidence type="ECO:0000269" key="5">
    <source>
    </source>
</evidence>
<evidence type="ECO:0000269" key="6">
    <source>
    </source>
</evidence>
<evidence type="ECO:0000269" key="7">
    <source ref="1"/>
</evidence>
<evidence type="ECO:0000269" key="8">
    <source ref="5"/>
</evidence>
<evidence type="ECO:0000305" key="9"/>
<evidence type="ECO:0007829" key="10">
    <source>
        <dbReference type="PDB" id="7O4P"/>
    </source>
</evidence>
<feature type="signal peptide" evidence="4">
    <location>
        <begin position="1"/>
        <end position="16"/>
    </location>
</feature>
<feature type="chain" id="PRO_0000017570" description="Zymogen granule membrane protein 16">
    <location>
        <begin position="17"/>
        <end position="167"/>
    </location>
</feature>
<feature type="domain" description="Jacalin-type lectin" evidence="2">
    <location>
        <begin position="24"/>
        <end position="159"/>
    </location>
</feature>
<feature type="sequence variant" id="VAR_034587" description="In dbSNP:rs235636." evidence="3 5 7 8">
    <original>G</original>
    <variation>S</variation>
    <location>
        <position position="32"/>
    </location>
</feature>
<feature type="sequence variant" id="VAR_070695" description="In dbSNP:rs235637.">
    <original>V</original>
    <variation>L</variation>
    <location>
        <position position="109"/>
    </location>
</feature>
<feature type="sequence variant" id="VAR_034588" description="In dbSNP:rs235638." evidence="3 5 7 8">
    <original>S</original>
    <variation>T</variation>
    <location>
        <position position="162"/>
    </location>
</feature>
<feature type="strand" evidence="10">
    <location>
        <begin position="25"/>
        <end position="31"/>
    </location>
</feature>
<feature type="strand" evidence="10">
    <location>
        <begin position="35"/>
        <end position="39"/>
    </location>
</feature>
<feature type="helix" evidence="10">
    <location>
        <begin position="41"/>
        <end position="46"/>
    </location>
</feature>
<feature type="strand" evidence="10">
    <location>
        <begin position="48"/>
        <end position="56"/>
    </location>
</feature>
<feature type="strand" evidence="10">
    <location>
        <begin position="61"/>
        <end position="68"/>
    </location>
</feature>
<feature type="strand" evidence="10">
    <location>
        <begin position="79"/>
        <end position="87"/>
    </location>
</feature>
<feature type="strand" evidence="10">
    <location>
        <begin position="94"/>
        <end position="112"/>
    </location>
</feature>
<feature type="strand" evidence="10">
    <location>
        <begin position="117"/>
        <end position="121"/>
    </location>
</feature>
<feature type="strand" evidence="10">
    <location>
        <begin position="125"/>
        <end position="130"/>
    </location>
</feature>
<feature type="strand" evidence="10">
    <location>
        <begin position="138"/>
        <end position="158"/>
    </location>
</feature>
<accession>O60844</accession>
<accession>B2R4Z3</accession>
<accession>B9EK72</accession>
<keyword id="KW-0002">3D-structure</keyword>
<keyword id="KW-0968">Cytoplasmic vesicle</keyword>
<keyword id="KW-0903">Direct protein sequencing</keyword>
<keyword id="KW-0272">Extracellular matrix</keyword>
<keyword id="KW-0333">Golgi apparatus</keyword>
<keyword id="KW-0430">Lectin</keyword>
<keyword id="KW-0653">Protein transport</keyword>
<keyword id="KW-1267">Proteomics identification</keyword>
<keyword id="KW-1185">Reference proteome</keyword>
<keyword id="KW-0964">Secreted</keyword>
<keyword id="KW-0732">Signal</keyword>
<keyword id="KW-0813">Transport</keyword>